<evidence type="ECO:0000255" key="1">
    <source>
        <dbReference type="HAMAP-Rule" id="MF_01385"/>
    </source>
</evidence>
<dbReference type="EMBL" id="AP009552">
    <property type="protein sequence ID" value="BAG04004.1"/>
    <property type="molecule type" value="Genomic_DNA"/>
</dbReference>
<dbReference type="RefSeq" id="WP_012266864.1">
    <property type="nucleotide sequence ID" value="NC_010296.1"/>
</dbReference>
<dbReference type="SMR" id="B0JS46"/>
<dbReference type="STRING" id="449447.MAE_41820"/>
<dbReference type="PaxDb" id="449447-MAE_41820"/>
<dbReference type="EnsemblBacteria" id="BAG04004">
    <property type="protein sequence ID" value="BAG04004"/>
    <property type="gene ID" value="MAE_41820"/>
</dbReference>
<dbReference type="KEGG" id="mar:MAE_41820"/>
<dbReference type="PATRIC" id="fig|449447.4.peg.3787"/>
<dbReference type="eggNOG" id="COG0830">
    <property type="taxonomic scope" value="Bacteria"/>
</dbReference>
<dbReference type="HOGENOM" id="CLU_049215_2_1_3"/>
<dbReference type="BioCyc" id="MAER449447:MAE_RS18105-MONOMER"/>
<dbReference type="Proteomes" id="UP000001510">
    <property type="component" value="Chromosome"/>
</dbReference>
<dbReference type="GO" id="GO:0005737">
    <property type="term" value="C:cytoplasm"/>
    <property type="evidence" value="ECO:0007669"/>
    <property type="project" value="UniProtKB-SubCell"/>
</dbReference>
<dbReference type="GO" id="GO:0016151">
    <property type="term" value="F:nickel cation binding"/>
    <property type="evidence" value="ECO:0007669"/>
    <property type="project" value="UniProtKB-UniRule"/>
</dbReference>
<dbReference type="Gene3D" id="1.10.4190.10">
    <property type="entry name" value="Urease accessory protein UreF"/>
    <property type="match status" value="1"/>
</dbReference>
<dbReference type="HAMAP" id="MF_01385">
    <property type="entry name" value="UreF"/>
    <property type="match status" value="1"/>
</dbReference>
<dbReference type="InterPro" id="IPR002639">
    <property type="entry name" value="UreF"/>
</dbReference>
<dbReference type="InterPro" id="IPR038277">
    <property type="entry name" value="UreF_sf"/>
</dbReference>
<dbReference type="PANTHER" id="PTHR33620">
    <property type="entry name" value="UREASE ACCESSORY PROTEIN F"/>
    <property type="match status" value="1"/>
</dbReference>
<dbReference type="PANTHER" id="PTHR33620:SF1">
    <property type="entry name" value="UREASE ACCESSORY PROTEIN F"/>
    <property type="match status" value="1"/>
</dbReference>
<dbReference type="Pfam" id="PF01730">
    <property type="entry name" value="UreF"/>
    <property type="match status" value="1"/>
</dbReference>
<dbReference type="PIRSF" id="PIRSF009467">
    <property type="entry name" value="Ureas_acces_UreF"/>
    <property type="match status" value="1"/>
</dbReference>
<name>UREF_MICAN</name>
<organism>
    <name type="scientific">Microcystis aeruginosa (strain NIES-843 / IAM M-2473)</name>
    <dbReference type="NCBI Taxonomy" id="449447"/>
    <lineage>
        <taxon>Bacteria</taxon>
        <taxon>Bacillati</taxon>
        <taxon>Cyanobacteriota</taxon>
        <taxon>Cyanophyceae</taxon>
        <taxon>Oscillatoriophycideae</taxon>
        <taxon>Chroococcales</taxon>
        <taxon>Microcystaceae</taxon>
        <taxon>Microcystis</taxon>
    </lineage>
</organism>
<proteinExistence type="inferred from homology"/>
<comment type="function">
    <text evidence="1">Required for maturation of urease via the functional incorporation of the urease nickel metallocenter.</text>
</comment>
<comment type="subunit">
    <text evidence="1">UreD, UreF and UreG form a complex that acts as a GTP-hydrolysis-dependent molecular chaperone, activating the urease apoprotein by helping to assemble the nickel containing metallocenter of UreC. The UreE protein probably delivers the nickel.</text>
</comment>
<comment type="subcellular location">
    <subcellularLocation>
        <location evidence="1">Cytoplasm</location>
    </subcellularLocation>
</comment>
<comment type="similarity">
    <text evidence="1">Belongs to the UreF family.</text>
</comment>
<sequence>MLDQKELLCLLQLASPILPVGAYSYSEGLETLVEKGIISNSASLNDWLERSLCQGSIRLETAVLLRVYRCFCQEDFTKLNYWDNWLSATRETAELRQQSWQMGRSLLNLLRELAPARDNLPEQANYATAFAIGASHWQIGEELAVLGYLHSWASNLINAGLRLIPLGQTLGQSLLIGLQPSLLTATADIISLADENLSSWSWGLSFASMNHETQYSRLFRS</sequence>
<accession>B0JS46</accession>
<feature type="chain" id="PRO_0000344138" description="Urease accessory protein UreF">
    <location>
        <begin position="1"/>
        <end position="221"/>
    </location>
</feature>
<keyword id="KW-0143">Chaperone</keyword>
<keyword id="KW-0963">Cytoplasm</keyword>
<keyword id="KW-0996">Nickel insertion</keyword>
<protein>
    <recommendedName>
        <fullName evidence="1">Urease accessory protein UreF</fullName>
    </recommendedName>
</protein>
<gene>
    <name evidence="1" type="primary">ureF</name>
    <name type="ordered locus">MAE_41820</name>
</gene>
<reference key="1">
    <citation type="journal article" date="2007" name="DNA Res.">
        <title>Complete genomic structure of the bloom-forming toxic cyanobacterium Microcystis aeruginosa NIES-843.</title>
        <authorList>
            <person name="Kaneko T."/>
            <person name="Nakajima N."/>
            <person name="Okamoto S."/>
            <person name="Suzuki I."/>
            <person name="Tanabe Y."/>
            <person name="Tamaoki M."/>
            <person name="Nakamura Y."/>
            <person name="Kasai F."/>
            <person name="Watanabe A."/>
            <person name="Kawashima K."/>
            <person name="Kishida Y."/>
            <person name="Ono A."/>
            <person name="Shimizu Y."/>
            <person name="Takahashi C."/>
            <person name="Minami C."/>
            <person name="Fujishiro T."/>
            <person name="Kohara M."/>
            <person name="Katoh M."/>
            <person name="Nakazaki N."/>
            <person name="Nakayama S."/>
            <person name="Yamada M."/>
            <person name="Tabata S."/>
            <person name="Watanabe M.M."/>
        </authorList>
    </citation>
    <scope>NUCLEOTIDE SEQUENCE [LARGE SCALE GENOMIC DNA]</scope>
    <source>
        <strain>NIES-843 / IAM M-247</strain>
    </source>
</reference>